<feature type="chain" id="PRO_0000145781" description="Bifunctional F420 biosynthesis protein FbiB">
    <location>
        <begin position="1"/>
        <end position="452"/>
    </location>
</feature>
<feature type="region of interest" description="Coenzyme F420:L-glutamate ligase" evidence="1">
    <location>
        <begin position="1"/>
        <end position="248"/>
    </location>
</feature>
<feature type="region of interest" description="Dehydro-coenzyme F420-0 reductase" evidence="1">
    <location>
        <begin position="249"/>
        <end position="452"/>
    </location>
</feature>
<feature type="binding site" evidence="1">
    <location>
        <begin position="24"/>
        <end position="27"/>
    </location>
    <ligand>
        <name>GTP</name>
        <dbReference type="ChEBI" id="CHEBI:37565"/>
    </ligand>
</feature>
<feature type="binding site" evidence="1">
    <location>
        <position position="54"/>
    </location>
    <ligand>
        <name>GTP</name>
        <dbReference type="ChEBI" id="CHEBI:37565"/>
    </ligand>
</feature>
<feature type="binding site" evidence="1">
    <location>
        <position position="59"/>
    </location>
    <ligand>
        <name>GTP</name>
        <dbReference type="ChEBI" id="CHEBI:37565"/>
    </ligand>
</feature>
<feature type="binding site" evidence="1">
    <location>
        <position position="113"/>
    </location>
    <ligand>
        <name>a divalent metal cation</name>
        <dbReference type="ChEBI" id="CHEBI:60240"/>
        <label>1</label>
    </ligand>
</feature>
<feature type="binding site" evidence="1">
    <location>
        <position position="116"/>
    </location>
    <ligand>
        <name>GTP</name>
        <dbReference type="ChEBI" id="CHEBI:37565"/>
    </ligand>
</feature>
<feature type="binding site" evidence="1">
    <location>
        <position position="154"/>
    </location>
    <ligand>
        <name>a divalent metal cation</name>
        <dbReference type="ChEBI" id="CHEBI:60240"/>
        <label>1</label>
    </ligand>
</feature>
<feature type="binding site" evidence="1">
    <location>
        <position position="155"/>
    </location>
    <ligand>
        <name>a divalent metal cation</name>
        <dbReference type="ChEBI" id="CHEBI:60240"/>
        <label>2</label>
    </ligand>
</feature>
<feature type="binding site" evidence="1">
    <location>
        <begin position="264"/>
        <end position="268"/>
    </location>
    <ligand>
        <name>FMN</name>
        <dbReference type="ChEBI" id="CHEBI:58210"/>
    </ligand>
</feature>
<feature type="binding site" evidence="1">
    <location>
        <position position="292"/>
    </location>
    <ligand>
        <name>FMN</name>
        <dbReference type="ChEBI" id="CHEBI:58210"/>
    </ligand>
</feature>
<feature type="binding site" evidence="1">
    <location>
        <position position="324"/>
    </location>
    <ligand>
        <name>coenzyme F420-(gamma-Glu)n</name>
        <dbReference type="ChEBI" id="CHEBI:133980"/>
    </ligand>
</feature>
<feature type="binding site" evidence="1">
    <location>
        <position position="403"/>
    </location>
    <ligand>
        <name>FMN</name>
        <dbReference type="ChEBI" id="CHEBI:58210"/>
    </ligand>
</feature>
<feature type="binding site" evidence="1">
    <location>
        <position position="440"/>
    </location>
    <ligand>
        <name>FMN</name>
        <dbReference type="ChEBI" id="CHEBI:58210"/>
    </ligand>
</feature>
<name>FBIB_NOCFA</name>
<reference key="1">
    <citation type="journal article" date="2004" name="Proc. Natl. Acad. Sci. U.S.A.">
        <title>The complete genomic sequence of Nocardia farcinica IFM 10152.</title>
        <authorList>
            <person name="Ishikawa J."/>
            <person name="Yamashita A."/>
            <person name="Mikami Y."/>
            <person name="Hoshino Y."/>
            <person name="Kurita H."/>
            <person name="Hotta K."/>
            <person name="Shiba T."/>
            <person name="Hattori M."/>
        </authorList>
    </citation>
    <scope>NUCLEOTIDE SEQUENCE [LARGE SCALE GENOMIC DNA]</scope>
    <source>
        <strain>IFM 10152</strain>
    </source>
</reference>
<proteinExistence type="inferred from homology"/>
<gene>
    <name evidence="1" type="primary">fbiB</name>
    <name type="ordered locus">NFA_46200</name>
</gene>
<keyword id="KW-0342">GTP-binding</keyword>
<keyword id="KW-0436">Ligase</keyword>
<keyword id="KW-0460">Magnesium</keyword>
<keyword id="KW-0464">Manganese</keyword>
<keyword id="KW-0479">Metal-binding</keyword>
<keyword id="KW-0511">Multifunctional enzyme</keyword>
<keyword id="KW-0547">Nucleotide-binding</keyword>
<keyword id="KW-0560">Oxidoreductase</keyword>
<keyword id="KW-0630">Potassium</keyword>
<keyword id="KW-1185">Reference proteome</keyword>
<comment type="function">
    <text evidence="1">Bifunctional enzyme that catalyzes the GTP-dependent successive addition of two or more gamma-linked L-glutamates to the L-lactyl phosphodiester of 7,8-didemethyl-8-hydroxy-5-deazariboflavin (F420-0) to form polyglutamated F420 derivatives, and the FMNH2-dependent reduction of dehydro-F420-0 to form F420-0.</text>
</comment>
<comment type="catalytic activity">
    <reaction evidence="1">
        <text>oxidized coenzyme F420-0 + GTP + L-glutamate = oxidized coenzyme F420-1 + GDP + phosphate + H(+)</text>
        <dbReference type="Rhea" id="RHEA:30555"/>
        <dbReference type="ChEBI" id="CHEBI:15378"/>
        <dbReference type="ChEBI" id="CHEBI:29985"/>
        <dbReference type="ChEBI" id="CHEBI:37565"/>
        <dbReference type="ChEBI" id="CHEBI:43474"/>
        <dbReference type="ChEBI" id="CHEBI:58189"/>
        <dbReference type="ChEBI" id="CHEBI:59907"/>
        <dbReference type="ChEBI" id="CHEBI:59920"/>
        <dbReference type="EC" id="6.3.2.31"/>
    </reaction>
</comment>
<comment type="catalytic activity">
    <reaction evidence="1">
        <text>oxidized coenzyme F420-0 + FMN + H(+) = dehydro coenzyme F420-0 + FMNH2</text>
        <dbReference type="Rhea" id="RHEA:60360"/>
        <dbReference type="ChEBI" id="CHEBI:15378"/>
        <dbReference type="ChEBI" id="CHEBI:57618"/>
        <dbReference type="ChEBI" id="CHEBI:58210"/>
        <dbReference type="ChEBI" id="CHEBI:59907"/>
        <dbReference type="ChEBI" id="CHEBI:143705"/>
        <dbReference type="EC" id="1.3.8.17"/>
    </reaction>
</comment>
<comment type="catalytic activity">
    <reaction evidence="1">
        <text>oxidized coenzyme F420-1 + GTP + L-glutamate = oxidized coenzyme F420-2 + GDP + phosphate + H(+)</text>
        <dbReference type="Rhea" id="RHEA:30523"/>
        <dbReference type="ChEBI" id="CHEBI:15378"/>
        <dbReference type="ChEBI" id="CHEBI:29985"/>
        <dbReference type="ChEBI" id="CHEBI:37565"/>
        <dbReference type="ChEBI" id="CHEBI:43474"/>
        <dbReference type="ChEBI" id="CHEBI:57922"/>
        <dbReference type="ChEBI" id="CHEBI:58189"/>
        <dbReference type="ChEBI" id="CHEBI:59920"/>
        <dbReference type="EC" id="6.3.2.34"/>
    </reaction>
</comment>
<comment type="cofactor">
    <cofactor evidence="1">
        <name>Mg(2+)</name>
        <dbReference type="ChEBI" id="CHEBI:18420"/>
    </cofactor>
    <cofactor evidence="1">
        <name>Mn(2+)</name>
        <dbReference type="ChEBI" id="CHEBI:29035"/>
    </cofactor>
    <text evidence="1">Binds 2 divalent metal cations per subunit. The ions could be magnesium and/or manganese.</text>
</comment>
<comment type="cofactor">
    <cofactor evidence="1">
        <name>K(+)</name>
        <dbReference type="ChEBI" id="CHEBI:29103"/>
    </cofactor>
    <text evidence="1">Monovalent cation. The ion could be potassium.</text>
</comment>
<comment type="pathway">
    <text evidence="1">Cofactor biosynthesis; coenzyme F420 biosynthesis.</text>
</comment>
<comment type="similarity">
    <text evidence="1">In the N-terminal section; belongs to the CofE family.</text>
</comment>
<sequence length="452" mass="47993">MVSAPGDHAGVSREGLRILPVTGLPEFRPGDDVAERIAAAAPWLADGDILVVTSKIIAKAEGRVVPAPVDPEERDAVRRALVEQEAVRVLARKGRTLITENKLGIVQAASGVDGSNVEKDELVLLPADPDASAAALRAGLAERLGVRVAVVVTDTMGRAWRNGQTDAAIGAAGLRVLHDYAGAVDGQGNELHVTQVAVADELAAAADLVKGKLRGVPVAVVRGLPTQEDGSTAADLVRAGEEDLFWLGTAEAVERGRREAVLLRRSVRTFADTPVEPDTIRAAVSVALTAPAPHHTRPVRFVWVRDAQRRQRLLAAMADKWRADLRADGLDPERIERRVGRGRILFDAPEVLIPCCVPDGAHSYPDERRQAAETTMFTVAVGAAVQGLLVALATEGVGSCWIGSTIFAPEVTRAELDLPADWNPLGAIAVGYPTEELAPRPPRDPGDGLVER</sequence>
<evidence type="ECO:0000255" key="1">
    <source>
        <dbReference type="HAMAP-Rule" id="MF_01259"/>
    </source>
</evidence>
<accession>Q5YQS0</accession>
<protein>
    <recommendedName>
        <fullName evidence="1">Bifunctional F420 biosynthesis protein FbiB</fullName>
    </recommendedName>
    <domain>
        <recommendedName>
            <fullName evidence="1">Coenzyme F420:L-glutamate ligase</fullName>
            <ecNumber evidence="1">6.3.2.31</ecNumber>
            <ecNumber evidence="1">6.3.2.34</ecNumber>
        </recommendedName>
        <alternativeName>
            <fullName evidence="1">Coenzyme F420-0:L-glutamate ligase</fullName>
        </alternativeName>
        <alternativeName>
            <fullName evidence="1">Coenzyme F420-1:gamma-L-glutamate ligase</fullName>
        </alternativeName>
    </domain>
    <domain>
        <recommendedName>
            <fullName evidence="1">Dehydro-coenzyme F420-0 reductase</fullName>
            <ecNumber evidence="1">1.3.8.17</ecNumber>
        </recommendedName>
    </domain>
</protein>
<dbReference type="EC" id="6.3.2.31" evidence="1"/>
<dbReference type="EC" id="6.3.2.34" evidence="1"/>
<dbReference type="EC" id="1.3.8.17" evidence="1"/>
<dbReference type="EMBL" id="AP006618">
    <property type="protein sequence ID" value="BAD59471.1"/>
    <property type="molecule type" value="Genomic_DNA"/>
</dbReference>
<dbReference type="RefSeq" id="WP_011211155.1">
    <property type="nucleotide sequence ID" value="NC_006361.1"/>
</dbReference>
<dbReference type="SMR" id="Q5YQS0"/>
<dbReference type="STRING" id="247156.NFA_46200"/>
<dbReference type="GeneID" id="61135224"/>
<dbReference type="KEGG" id="nfa:NFA_46200"/>
<dbReference type="eggNOG" id="COG0778">
    <property type="taxonomic scope" value="Bacteria"/>
</dbReference>
<dbReference type="eggNOG" id="COG1478">
    <property type="taxonomic scope" value="Bacteria"/>
</dbReference>
<dbReference type="HOGENOM" id="CLU_051152_0_0_11"/>
<dbReference type="OrthoDB" id="9788295at2"/>
<dbReference type="UniPathway" id="UPA00071"/>
<dbReference type="Proteomes" id="UP000006820">
    <property type="component" value="Chromosome"/>
</dbReference>
<dbReference type="GO" id="GO:0052618">
    <property type="term" value="F:coenzyme F420-0:L-glutamate ligase activity"/>
    <property type="evidence" value="ECO:0007669"/>
    <property type="project" value="UniProtKB-UniRule"/>
</dbReference>
<dbReference type="GO" id="GO:0052619">
    <property type="term" value="F:coenzyme F420-1:gamma-L-glutamate ligase activity"/>
    <property type="evidence" value="ECO:0007669"/>
    <property type="project" value="UniProtKB-UniRule"/>
</dbReference>
<dbReference type="GO" id="GO:0005525">
    <property type="term" value="F:GTP binding"/>
    <property type="evidence" value="ECO:0007669"/>
    <property type="project" value="UniProtKB-KW"/>
</dbReference>
<dbReference type="GO" id="GO:0046872">
    <property type="term" value="F:metal ion binding"/>
    <property type="evidence" value="ECO:0007669"/>
    <property type="project" value="UniProtKB-KW"/>
</dbReference>
<dbReference type="GO" id="GO:0052890">
    <property type="term" value="F:oxidoreductase activity, acting on the CH-CH group of donors, with a flavin as acceptor"/>
    <property type="evidence" value="ECO:0007669"/>
    <property type="project" value="UniProtKB-UniRule"/>
</dbReference>
<dbReference type="GO" id="GO:0052645">
    <property type="term" value="P:F420-0 metabolic process"/>
    <property type="evidence" value="ECO:0007669"/>
    <property type="project" value="UniProtKB-UniRule"/>
</dbReference>
<dbReference type="CDD" id="cd20607">
    <property type="entry name" value="FbiB_C-like"/>
    <property type="match status" value="1"/>
</dbReference>
<dbReference type="Gene3D" id="3.30.1330.100">
    <property type="entry name" value="CofE-like"/>
    <property type="match status" value="1"/>
</dbReference>
<dbReference type="Gene3D" id="3.90.1660.10">
    <property type="entry name" value="CofE-like domain"/>
    <property type="match status" value="1"/>
</dbReference>
<dbReference type="Gene3D" id="3.40.109.10">
    <property type="entry name" value="NADH Oxidase"/>
    <property type="match status" value="1"/>
</dbReference>
<dbReference type="HAMAP" id="MF_01259">
    <property type="entry name" value="F420_ligase_FbiB"/>
    <property type="match status" value="1"/>
</dbReference>
<dbReference type="InterPro" id="IPR008225">
    <property type="entry name" value="F420-0_g-glutamyl_ligase"/>
</dbReference>
<dbReference type="InterPro" id="IPR002847">
    <property type="entry name" value="F420-0_gamma-glut_ligase-dom"/>
</dbReference>
<dbReference type="InterPro" id="IPR019943">
    <property type="entry name" value="F420_FbiB_C"/>
</dbReference>
<dbReference type="InterPro" id="IPR023661">
    <property type="entry name" value="FbiB"/>
</dbReference>
<dbReference type="InterPro" id="IPR029479">
    <property type="entry name" value="Nitroreductase"/>
</dbReference>
<dbReference type="InterPro" id="IPR000415">
    <property type="entry name" value="Nitroreductase-like"/>
</dbReference>
<dbReference type="NCBIfam" id="TIGR01916">
    <property type="entry name" value="F420_cofE"/>
    <property type="match status" value="1"/>
</dbReference>
<dbReference type="NCBIfam" id="TIGR03553">
    <property type="entry name" value="F420_FbiB_CTERM"/>
    <property type="match status" value="1"/>
</dbReference>
<dbReference type="NCBIfam" id="NF009810">
    <property type="entry name" value="PRK13294.1"/>
    <property type="match status" value="1"/>
</dbReference>
<dbReference type="PANTHER" id="PTHR47917">
    <property type="match status" value="1"/>
</dbReference>
<dbReference type="PANTHER" id="PTHR47917:SF1">
    <property type="entry name" value="COENZYME F420:L-GLUTAMATE LIGASE"/>
    <property type="match status" value="1"/>
</dbReference>
<dbReference type="Pfam" id="PF01996">
    <property type="entry name" value="F420_ligase"/>
    <property type="match status" value="1"/>
</dbReference>
<dbReference type="Pfam" id="PF00881">
    <property type="entry name" value="Nitroreductase"/>
    <property type="match status" value="1"/>
</dbReference>
<dbReference type="SUPFAM" id="SSF144010">
    <property type="entry name" value="CofE-like"/>
    <property type="match status" value="1"/>
</dbReference>
<dbReference type="SUPFAM" id="SSF55469">
    <property type="entry name" value="FMN-dependent nitroreductase-like"/>
    <property type="match status" value="1"/>
</dbReference>
<organism>
    <name type="scientific">Nocardia farcinica (strain IFM 10152)</name>
    <dbReference type="NCBI Taxonomy" id="247156"/>
    <lineage>
        <taxon>Bacteria</taxon>
        <taxon>Bacillati</taxon>
        <taxon>Actinomycetota</taxon>
        <taxon>Actinomycetes</taxon>
        <taxon>Mycobacteriales</taxon>
        <taxon>Nocardiaceae</taxon>
        <taxon>Nocardia</taxon>
    </lineage>
</organism>